<keyword id="KW-0143">Chaperone</keyword>
<keyword id="KW-0963">Cytoplasm</keyword>
<feature type="chain" id="PRO_0000174825" description="Co-chaperonin GroES 1">
    <location>
        <begin position="1"/>
        <end position="98"/>
    </location>
</feature>
<evidence type="ECO:0000255" key="1">
    <source>
        <dbReference type="HAMAP-Rule" id="MF_00580"/>
    </source>
</evidence>
<evidence type="ECO:0000305" key="2"/>
<organism>
    <name type="scientific">Rhodopseudomonas palustris (strain ATCC BAA-98 / CGA009)</name>
    <dbReference type="NCBI Taxonomy" id="258594"/>
    <lineage>
        <taxon>Bacteria</taxon>
        <taxon>Pseudomonadati</taxon>
        <taxon>Pseudomonadota</taxon>
        <taxon>Alphaproteobacteria</taxon>
        <taxon>Hyphomicrobiales</taxon>
        <taxon>Nitrobacteraceae</taxon>
        <taxon>Rhodopseudomonas</taxon>
    </lineage>
</organism>
<sequence>MAKINFRPLHDRVVVKRIDAETKTKGGIIIPDSAKEKPQEGQVIAVGPGGRDETGKLTPIDVKVGDRVLFGKWSGTEIKLDGEELLIMKESDIMGVVG</sequence>
<dbReference type="EMBL" id="BX572596">
    <property type="protein sequence ID" value="CAE26584.1"/>
    <property type="molecule type" value="Genomic_DNA"/>
</dbReference>
<dbReference type="SMR" id="P60366"/>
<dbReference type="STRING" id="258594.RPA1141"/>
<dbReference type="eggNOG" id="COG0234">
    <property type="taxonomic scope" value="Bacteria"/>
</dbReference>
<dbReference type="HOGENOM" id="CLU_132825_2_0_5"/>
<dbReference type="PhylomeDB" id="P60366"/>
<dbReference type="GO" id="GO:0005737">
    <property type="term" value="C:cytoplasm"/>
    <property type="evidence" value="ECO:0007669"/>
    <property type="project" value="UniProtKB-SubCell"/>
</dbReference>
<dbReference type="GO" id="GO:0005524">
    <property type="term" value="F:ATP binding"/>
    <property type="evidence" value="ECO:0007669"/>
    <property type="project" value="InterPro"/>
</dbReference>
<dbReference type="GO" id="GO:0046872">
    <property type="term" value="F:metal ion binding"/>
    <property type="evidence" value="ECO:0007669"/>
    <property type="project" value="TreeGrafter"/>
</dbReference>
<dbReference type="GO" id="GO:0044183">
    <property type="term" value="F:protein folding chaperone"/>
    <property type="evidence" value="ECO:0007669"/>
    <property type="project" value="InterPro"/>
</dbReference>
<dbReference type="GO" id="GO:0051087">
    <property type="term" value="F:protein-folding chaperone binding"/>
    <property type="evidence" value="ECO:0007669"/>
    <property type="project" value="TreeGrafter"/>
</dbReference>
<dbReference type="GO" id="GO:0051082">
    <property type="term" value="F:unfolded protein binding"/>
    <property type="evidence" value="ECO:0007669"/>
    <property type="project" value="TreeGrafter"/>
</dbReference>
<dbReference type="GO" id="GO:0051085">
    <property type="term" value="P:chaperone cofactor-dependent protein refolding"/>
    <property type="evidence" value="ECO:0007669"/>
    <property type="project" value="TreeGrafter"/>
</dbReference>
<dbReference type="CDD" id="cd00320">
    <property type="entry name" value="cpn10"/>
    <property type="match status" value="1"/>
</dbReference>
<dbReference type="FunFam" id="2.30.33.40:FF:000001">
    <property type="entry name" value="10 kDa chaperonin"/>
    <property type="match status" value="1"/>
</dbReference>
<dbReference type="Gene3D" id="2.30.33.40">
    <property type="entry name" value="GroES chaperonin"/>
    <property type="match status" value="1"/>
</dbReference>
<dbReference type="HAMAP" id="MF_00580">
    <property type="entry name" value="CH10"/>
    <property type="match status" value="1"/>
</dbReference>
<dbReference type="InterPro" id="IPR020818">
    <property type="entry name" value="Chaperonin_GroES"/>
</dbReference>
<dbReference type="InterPro" id="IPR037124">
    <property type="entry name" value="Chaperonin_GroES_sf"/>
</dbReference>
<dbReference type="InterPro" id="IPR018369">
    <property type="entry name" value="Chaprnonin_Cpn10_CS"/>
</dbReference>
<dbReference type="InterPro" id="IPR011032">
    <property type="entry name" value="GroES-like_sf"/>
</dbReference>
<dbReference type="NCBIfam" id="NF001527">
    <property type="entry name" value="PRK00364.1-2"/>
    <property type="match status" value="1"/>
</dbReference>
<dbReference type="NCBIfam" id="NF001529">
    <property type="entry name" value="PRK00364.1-5"/>
    <property type="match status" value="1"/>
</dbReference>
<dbReference type="NCBIfam" id="NF001531">
    <property type="entry name" value="PRK00364.2-2"/>
    <property type="match status" value="1"/>
</dbReference>
<dbReference type="NCBIfam" id="NF001533">
    <property type="entry name" value="PRK00364.2-4"/>
    <property type="match status" value="1"/>
</dbReference>
<dbReference type="NCBIfam" id="NF001534">
    <property type="entry name" value="PRK00364.2-5"/>
    <property type="match status" value="1"/>
</dbReference>
<dbReference type="PANTHER" id="PTHR10772">
    <property type="entry name" value="10 KDA HEAT SHOCK PROTEIN"/>
    <property type="match status" value="1"/>
</dbReference>
<dbReference type="PANTHER" id="PTHR10772:SF58">
    <property type="entry name" value="CO-CHAPERONIN GROES"/>
    <property type="match status" value="1"/>
</dbReference>
<dbReference type="Pfam" id="PF00166">
    <property type="entry name" value="Cpn10"/>
    <property type="match status" value="1"/>
</dbReference>
<dbReference type="PRINTS" id="PR00297">
    <property type="entry name" value="CHAPERONIN10"/>
</dbReference>
<dbReference type="SMART" id="SM00883">
    <property type="entry name" value="Cpn10"/>
    <property type="match status" value="1"/>
</dbReference>
<dbReference type="SUPFAM" id="SSF50129">
    <property type="entry name" value="GroES-like"/>
    <property type="match status" value="1"/>
</dbReference>
<dbReference type="PROSITE" id="PS00681">
    <property type="entry name" value="CHAPERONINS_CPN10"/>
    <property type="match status" value="1"/>
</dbReference>
<accession>P60366</accession>
<protein>
    <recommendedName>
        <fullName evidence="1">Co-chaperonin GroES 1</fullName>
    </recommendedName>
    <alternativeName>
        <fullName evidence="1">10 kDa chaperonin 1</fullName>
    </alternativeName>
    <alternativeName>
        <fullName evidence="1">Chaperonin-10 1</fullName>
        <shortName evidence="1">Cpn10 1</shortName>
    </alternativeName>
</protein>
<proteinExistence type="inferred from homology"/>
<gene>
    <name evidence="1" type="primary">groES1</name>
    <name evidence="1" type="synonym">groS1</name>
    <name type="ordered locus">RPA1141</name>
</gene>
<reference key="1">
    <citation type="journal article" date="2004" name="Nat. Biotechnol.">
        <title>Complete genome sequence of the metabolically versatile photosynthetic bacterium Rhodopseudomonas palustris.</title>
        <authorList>
            <person name="Larimer F.W."/>
            <person name="Chain P."/>
            <person name="Hauser L."/>
            <person name="Lamerdin J.E."/>
            <person name="Malfatti S."/>
            <person name="Do L."/>
            <person name="Land M.L."/>
            <person name="Pelletier D.A."/>
            <person name="Beatty J.T."/>
            <person name="Lang A.S."/>
            <person name="Tabita F.R."/>
            <person name="Gibson J.L."/>
            <person name="Hanson T.E."/>
            <person name="Bobst C."/>
            <person name="Torres y Torres J.L."/>
            <person name="Peres C."/>
            <person name="Harrison F.H."/>
            <person name="Gibson J."/>
            <person name="Harwood C.S."/>
        </authorList>
    </citation>
    <scope>NUCLEOTIDE SEQUENCE [LARGE SCALE GENOMIC DNA]</scope>
    <source>
        <strain>ATCC BAA-98 / CGA009</strain>
    </source>
</reference>
<name>CH101_RHOPA</name>
<comment type="function">
    <text evidence="1">Together with the chaperonin GroEL, plays an essential role in assisting protein folding. The GroEL-GroES system forms a nano-cage that allows encapsulation of the non-native substrate proteins and provides a physical environment optimized to promote and accelerate protein folding. GroES binds to the apical surface of the GroEL ring, thereby capping the opening of the GroEL channel.</text>
</comment>
<comment type="subunit">
    <text evidence="1">Heptamer of 7 subunits arranged in a ring. Interacts with the chaperonin GroEL.</text>
</comment>
<comment type="subcellular location">
    <subcellularLocation>
        <location evidence="1">Cytoplasm</location>
    </subcellularLocation>
</comment>
<comment type="similarity">
    <text evidence="1 2">Belongs to the GroES chaperonin family.</text>
</comment>